<keyword id="KW-0134">Cell wall</keyword>
<keyword id="KW-1185">Reference proteome</keyword>
<keyword id="KW-0677">Repeat</keyword>
<keyword id="KW-0964">Secreted</keyword>
<keyword id="KW-0732">Signal</keyword>
<reference key="1">
    <citation type="journal article" date="2000" name="Nature">
        <title>Sequence and analysis of chromosome 5 of the plant Arabidopsis thaliana.</title>
        <authorList>
            <person name="Tabata S."/>
            <person name="Kaneko T."/>
            <person name="Nakamura Y."/>
            <person name="Kotani H."/>
            <person name="Kato T."/>
            <person name="Asamizu E."/>
            <person name="Miyajima N."/>
            <person name="Sasamoto S."/>
            <person name="Kimura T."/>
            <person name="Hosouchi T."/>
            <person name="Kawashima K."/>
            <person name="Kohara M."/>
            <person name="Matsumoto M."/>
            <person name="Matsuno A."/>
            <person name="Muraki A."/>
            <person name="Nakayama S."/>
            <person name="Nakazaki N."/>
            <person name="Naruo K."/>
            <person name="Okumura S."/>
            <person name="Shinpo S."/>
            <person name="Takeuchi C."/>
            <person name="Wada T."/>
            <person name="Watanabe A."/>
            <person name="Yamada M."/>
            <person name="Yasuda M."/>
            <person name="Sato S."/>
            <person name="de la Bastide M."/>
            <person name="Huang E."/>
            <person name="Spiegel L."/>
            <person name="Gnoj L."/>
            <person name="O'Shaughnessy A."/>
            <person name="Preston R."/>
            <person name="Habermann K."/>
            <person name="Murray J."/>
            <person name="Johnson D."/>
            <person name="Rohlfing T."/>
            <person name="Nelson J."/>
            <person name="Stoneking T."/>
            <person name="Pepin K."/>
            <person name="Spieth J."/>
            <person name="Sekhon M."/>
            <person name="Armstrong J."/>
            <person name="Becker M."/>
            <person name="Belter E."/>
            <person name="Cordum H."/>
            <person name="Cordes M."/>
            <person name="Courtney L."/>
            <person name="Courtney W."/>
            <person name="Dante M."/>
            <person name="Du H."/>
            <person name="Edwards J."/>
            <person name="Fryman J."/>
            <person name="Haakensen B."/>
            <person name="Lamar E."/>
            <person name="Latreille P."/>
            <person name="Leonard S."/>
            <person name="Meyer R."/>
            <person name="Mulvaney E."/>
            <person name="Ozersky P."/>
            <person name="Riley A."/>
            <person name="Strowmatt C."/>
            <person name="Wagner-McPherson C."/>
            <person name="Wollam A."/>
            <person name="Yoakum M."/>
            <person name="Bell M."/>
            <person name="Dedhia N."/>
            <person name="Parnell L."/>
            <person name="Shah R."/>
            <person name="Rodriguez M."/>
            <person name="Hoon See L."/>
            <person name="Vil D."/>
            <person name="Baker J."/>
            <person name="Kirchoff K."/>
            <person name="Toth K."/>
            <person name="King L."/>
            <person name="Bahret A."/>
            <person name="Miller B."/>
            <person name="Marra M.A."/>
            <person name="Martienssen R."/>
            <person name="McCombie W.R."/>
            <person name="Wilson R.K."/>
            <person name="Murphy G."/>
            <person name="Bancroft I."/>
            <person name="Volckaert G."/>
            <person name="Wambutt R."/>
            <person name="Duesterhoeft A."/>
            <person name="Stiekema W."/>
            <person name="Pohl T."/>
            <person name="Entian K.-D."/>
            <person name="Terryn N."/>
            <person name="Hartley N."/>
            <person name="Bent E."/>
            <person name="Johnson S."/>
            <person name="Langham S.-A."/>
            <person name="McCullagh B."/>
            <person name="Robben J."/>
            <person name="Grymonprez B."/>
            <person name="Zimmermann W."/>
            <person name="Ramsperger U."/>
            <person name="Wedler H."/>
            <person name="Balke K."/>
            <person name="Wedler E."/>
            <person name="Peters S."/>
            <person name="van Staveren M."/>
            <person name="Dirkse W."/>
            <person name="Mooijman P."/>
            <person name="Klein Lankhorst R."/>
            <person name="Weitzenegger T."/>
            <person name="Bothe G."/>
            <person name="Rose M."/>
            <person name="Hauf J."/>
            <person name="Berneiser S."/>
            <person name="Hempel S."/>
            <person name="Feldpausch M."/>
            <person name="Lamberth S."/>
            <person name="Villarroel R."/>
            <person name="Gielen J."/>
            <person name="Ardiles W."/>
            <person name="Bents O."/>
            <person name="Lemcke K."/>
            <person name="Kolesov G."/>
            <person name="Mayer K.F.X."/>
            <person name="Rudd S."/>
            <person name="Schoof H."/>
            <person name="Schueller C."/>
            <person name="Zaccaria P."/>
            <person name="Mewes H.-W."/>
            <person name="Bevan M."/>
            <person name="Fransz P.F."/>
        </authorList>
    </citation>
    <scope>NUCLEOTIDE SEQUENCE [LARGE SCALE GENOMIC DNA]</scope>
    <source>
        <strain>cv. Columbia</strain>
    </source>
</reference>
<reference key="2">
    <citation type="journal article" date="2017" name="Plant J.">
        <title>Araport11: a complete reannotation of the Arabidopsis thaliana reference genome.</title>
        <authorList>
            <person name="Cheng C.Y."/>
            <person name="Krishnakumar V."/>
            <person name="Chan A.P."/>
            <person name="Thibaud-Nissen F."/>
            <person name="Schobel S."/>
            <person name="Town C.D."/>
        </authorList>
    </citation>
    <scope>GENOME REANNOTATION</scope>
    <source>
        <strain>cv. Columbia</strain>
    </source>
</reference>
<reference key="3">
    <citation type="journal article" date="2011" name="Plant Cell Rep.">
        <title>PELPK1 (At5g09530) contains a unique pentapeptide repeat and is a positive regulator of germination in Arabidopsis thaliana.</title>
        <authorList>
            <person name="Rashid A."/>
            <person name="Deyholos M.K."/>
        </authorList>
    </citation>
    <scope>GENE FAMILY</scope>
    <scope>NOMENCLATURE</scope>
</reference>
<gene>
    <name evidence="4" type="primary">PELPK2</name>
    <name evidence="7" type="ordered locus">At5g09520</name>
    <name evidence="9" type="ORF">F17I14.290</name>
    <name evidence="8" type="ORF">T5E8.1</name>
</gene>
<sequence>MTLKKSFSASLLSPFLIICLIALLSVPVSVGARRLLEEPKPEIPTFPELPKPEMPKLPEFPKLELPKLPEIPKPEMPKLPEIQKPELPTFPELPKMPEFPKFDFPKLPELPKPEETKVPAFTMPKFPGSP</sequence>
<evidence type="ECO:0000250" key="1">
    <source>
        <dbReference type="UniProtKB" id="Q9LXB8"/>
    </source>
</evidence>
<evidence type="ECO:0000255" key="2"/>
<evidence type="ECO:0000256" key="3">
    <source>
        <dbReference type="SAM" id="MobiDB-lite"/>
    </source>
</evidence>
<evidence type="ECO:0000303" key="4">
    <source>
    </source>
</evidence>
<evidence type="ECO:0000305" key="5"/>
<evidence type="ECO:0000305" key="6">
    <source>
    </source>
</evidence>
<evidence type="ECO:0000312" key="7">
    <source>
        <dbReference type="Araport" id="AT5G09520"/>
    </source>
</evidence>
<evidence type="ECO:0000312" key="8">
    <source>
        <dbReference type="EMBL" id="AL391712"/>
    </source>
</evidence>
<evidence type="ECO:0000312" key="9">
    <source>
        <dbReference type="EMBL" id="CAB89378.1"/>
    </source>
</evidence>
<dbReference type="EMBL" id="AL353994">
    <property type="protein sequence ID" value="CAB89378.1"/>
    <property type="molecule type" value="Genomic_DNA"/>
</dbReference>
<dbReference type="EMBL" id="AL391712">
    <property type="status" value="NOT_ANNOTATED_CDS"/>
    <property type="molecule type" value="Genomic_DNA"/>
</dbReference>
<dbReference type="EMBL" id="CP002688">
    <property type="protein sequence ID" value="AED91406.1"/>
    <property type="molecule type" value="Genomic_DNA"/>
</dbReference>
<dbReference type="PIR" id="T49946">
    <property type="entry name" value="T49946"/>
</dbReference>
<dbReference type="RefSeq" id="NP_196514.1">
    <property type="nucleotide sequence ID" value="NM_120989.3"/>
</dbReference>
<dbReference type="STRING" id="3702.Q9LXB7"/>
<dbReference type="PaxDb" id="3702-AT5G09520.1"/>
<dbReference type="ProteomicsDB" id="234771"/>
<dbReference type="EnsemblPlants" id="AT5G09520.1">
    <property type="protein sequence ID" value="AT5G09520.1"/>
    <property type="gene ID" value="AT5G09520"/>
</dbReference>
<dbReference type="GeneID" id="830811"/>
<dbReference type="Gramene" id="AT5G09520.1">
    <property type="protein sequence ID" value="AT5G09520.1"/>
    <property type="gene ID" value="AT5G09520"/>
</dbReference>
<dbReference type="KEGG" id="ath:AT5G09520"/>
<dbReference type="Araport" id="AT5G09520"/>
<dbReference type="TAIR" id="AT5G09520">
    <property type="gene designation" value="PELPK2"/>
</dbReference>
<dbReference type="eggNOG" id="ENOG502QSZR">
    <property type="taxonomic scope" value="Eukaryota"/>
</dbReference>
<dbReference type="HOGENOM" id="CLU_165094_0_0_1"/>
<dbReference type="InParanoid" id="Q9LXB7"/>
<dbReference type="OMA" id="MAYHRFL"/>
<dbReference type="PRO" id="PR:Q9LXB7"/>
<dbReference type="Proteomes" id="UP000006548">
    <property type="component" value="Chromosome 5"/>
</dbReference>
<dbReference type="ExpressionAtlas" id="Q9LXB7">
    <property type="expression patterns" value="baseline and differential"/>
</dbReference>
<dbReference type="GO" id="GO:0005576">
    <property type="term" value="C:extracellular region"/>
    <property type="evidence" value="ECO:0007669"/>
    <property type="project" value="UniProtKB-KW"/>
</dbReference>
<dbReference type="InterPro" id="IPR044659">
    <property type="entry name" value="PELPK1_2"/>
</dbReference>
<dbReference type="PANTHER" id="PTHR33088">
    <property type="entry name" value="MUCIN-2"/>
    <property type="match status" value="1"/>
</dbReference>
<dbReference type="PANTHER" id="PTHR33088:SF28">
    <property type="entry name" value="PROTEIN PELPK1-RELATED"/>
    <property type="match status" value="1"/>
</dbReference>
<feature type="signal peptide" evidence="2">
    <location>
        <begin position="1"/>
        <end position="32"/>
    </location>
</feature>
<feature type="chain" id="PRO_5010148413" description="Protein PELPK2">
    <location>
        <begin position="33"/>
        <end position="130"/>
    </location>
</feature>
<feature type="repeat" description="1" evidence="6">
    <location>
        <begin position="47"/>
        <end position="51"/>
    </location>
</feature>
<feature type="repeat" description="2" evidence="6">
    <location>
        <begin position="52"/>
        <end position="56"/>
    </location>
</feature>
<feature type="repeat" description="3" evidence="6">
    <location>
        <begin position="58"/>
        <end position="62"/>
    </location>
</feature>
<feature type="repeat" description="4" evidence="6">
    <location>
        <begin position="63"/>
        <end position="67"/>
    </location>
</feature>
<feature type="repeat" description="5" evidence="6">
    <location>
        <begin position="69"/>
        <end position="73"/>
    </location>
</feature>
<feature type="repeat" description="6" evidence="6">
    <location>
        <begin position="74"/>
        <end position="78"/>
    </location>
</feature>
<feature type="repeat" description="7" evidence="6">
    <location>
        <begin position="80"/>
        <end position="84"/>
    </location>
</feature>
<feature type="repeat" description="8" evidence="6">
    <location>
        <begin position="91"/>
        <end position="95"/>
    </location>
</feature>
<feature type="repeat" description="9" evidence="6">
    <location>
        <begin position="97"/>
        <end position="101"/>
    </location>
</feature>
<feature type="repeat" description="10" evidence="6">
    <location>
        <begin position="102"/>
        <end position="106"/>
    </location>
</feature>
<feature type="repeat" description="11" evidence="6">
    <location>
        <begin position="108"/>
        <end position="112"/>
    </location>
</feature>
<feature type="repeat" description="12" evidence="6">
    <location>
        <begin position="113"/>
        <end position="117"/>
    </location>
</feature>
<feature type="repeat" description="13" evidence="6">
    <location>
        <begin position="121"/>
        <end position="125"/>
    </location>
</feature>
<feature type="region of interest" description="13 X 5 AA tandem repeat of P-[DEGQ]-[AEFLIV]-[QPT]-K" evidence="6">
    <location>
        <begin position="47"/>
        <end position="125"/>
    </location>
</feature>
<feature type="region of interest" description="Disordered" evidence="3">
    <location>
        <begin position="71"/>
        <end position="130"/>
    </location>
</feature>
<feature type="compositionally biased region" description="Basic and acidic residues" evidence="3">
    <location>
        <begin position="71"/>
        <end position="84"/>
    </location>
</feature>
<feature type="compositionally biased region" description="Basic and acidic residues" evidence="3">
    <location>
        <begin position="98"/>
        <end position="117"/>
    </location>
</feature>
<proteinExistence type="inferred from homology"/>
<accession>Q9LXB7</accession>
<protein>
    <recommendedName>
        <fullName evidence="5">Protein PELPK2</fullName>
    </recommendedName>
    <alternativeName>
        <fullName evidence="4">Protein Pro-Glu-Leu|Ile|Val-Pro-Lys 2</fullName>
    </alternativeName>
</protein>
<name>PLPK2_ARATH</name>
<comment type="subcellular location">
    <subcellularLocation>
        <location evidence="1">Secreted</location>
        <location evidence="1">Cell wall</location>
    </subcellularLocation>
</comment>
<organism>
    <name type="scientific">Arabidopsis thaliana</name>
    <name type="common">Mouse-ear cress</name>
    <dbReference type="NCBI Taxonomy" id="3702"/>
    <lineage>
        <taxon>Eukaryota</taxon>
        <taxon>Viridiplantae</taxon>
        <taxon>Streptophyta</taxon>
        <taxon>Embryophyta</taxon>
        <taxon>Tracheophyta</taxon>
        <taxon>Spermatophyta</taxon>
        <taxon>Magnoliopsida</taxon>
        <taxon>eudicotyledons</taxon>
        <taxon>Gunneridae</taxon>
        <taxon>Pentapetalae</taxon>
        <taxon>rosids</taxon>
        <taxon>malvids</taxon>
        <taxon>Brassicales</taxon>
        <taxon>Brassicaceae</taxon>
        <taxon>Camelineae</taxon>
        <taxon>Arabidopsis</taxon>
    </lineage>
</organism>